<feature type="chain" id="PRO_0000381081" description="8-amino-7-oxononanoate synthase">
    <location>
        <begin position="1"/>
        <end position="390"/>
    </location>
</feature>
<feature type="binding site" evidence="1">
    <location>
        <position position="19"/>
    </location>
    <ligand>
        <name>substrate</name>
    </ligand>
</feature>
<feature type="binding site" evidence="1">
    <location>
        <begin position="106"/>
        <end position="107"/>
    </location>
    <ligand>
        <name>pyridoxal 5'-phosphate</name>
        <dbReference type="ChEBI" id="CHEBI:597326"/>
    </ligand>
</feature>
<feature type="binding site" evidence="1">
    <location>
        <position position="131"/>
    </location>
    <ligand>
        <name>substrate</name>
    </ligand>
</feature>
<feature type="binding site" evidence="1">
    <location>
        <position position="176"/>
    </location>
    <ligand>
        <name>pyridoxal 5'-phosphate</name>
        <dbReference type="ChEBI" id="CHEBI:597326"/>
    </ligand>
</feature>
<feature type="binding site" evidence="1">
    <location>
        <position position="204"/>
    </location>
    <ligand>
        <name>pyridoxal 5'-phosphate</name>
        <dbReference type="ChEBI" id="CHEBI:597326"/>
    </ligand>
</feature>
<feature type="binding site" evidence="1">
    <location>
        <position position="233"/>
    </location>
    <ligand>
        <name>pyridoxal 5'-phosphate</name>
        <dbReference type="ChEBI" id="CHEBI:597326"/>
    </ligand>
</feature>
<feature type="binding site" evidence="1">
    <location>
        <position position="350"/>
    </location>
    <ligand>
        <name>substrate</name>
    </ligand>
</feature>
<feature type="modified residue" description="N6-(pyridoxal phosphate)lysine" evidence="1">
    <location>
        <position position="236"/>
    </location>
</feature>
<sequence>MAFDLAARLAERRAADLYRQRPLLESPQGPEVVVDGQRLLAFCSNDYLGLANHPEVIAAWQAGAERWGVGGGASHLVVGHSTPHHQVEEALAELTGRPRALLFSTGYMANLGAITALVGQGDTVLQDRLNHASLLDGGLLSGARFNRYLHNDPASLASRLDKAVGNTLVVTDGVFSMDGDLADLPALANVARARGAWLMVDDAHGLGTLGAKGGGIVEHFGLGVDDVPVLIGTLGKACGTAGAFVAGSEALIEALVQFARPYIYTTSQPPALACATLKSLELLRRETWRREHLAALIRQFREGAQQLGLQLMDSPTPIQPIVIGDSAQALRLSRLLRERGLLVTAIRPPTVPAGSARLRVTLSAAHSEAQVQLLLNALAECYPQLENADA</sequence>
<comment type="function">
    <text evidence="1">Catalyzes the decarboxylative condensation of pimeloyl-[acyl-carrier protein] and L-alanine to produce 8-amino-7-oxononanoate (AON), [acyl-carrier protein], and carbon dioxide.</text>
</comment>
<comment type="catalytic activity">
    <reaction evidence="1">
        <text>6-carboxyhexanoyl-[ACP] + L-alanine + H(+) = (8S)-8-amino-7-oxononanoate + holo-[ACP] + CO2</text>
        <dbReference type="Rhea" id="RHEA:42288"/>
        <dbReference type="Rhea" id="RHEA-COMP:9685"/>
        <dbReference type="Rhea" id="RHEA-COMP:9955"/>
        <dbReference type="ChEBI" id="CHEBI:15378"/>
        <dbReference type="ChEBI" id="CHEBI:16526"/>
        <dbReference type="ChEBI" id="CHEBI:57972"/>
        <dbReference type="ChEBI" id="CHEBI:64479"/>
        <dbReference type="ChEBI" id="CHEBI:78846"/>
        <dbReference type="ChEBI" id="CHEBI:149468"/>
        <dbReference type="EC" id="2.3.1.47"/>
    </reaction>
</comment>
<comment type="cofactor">
    <cofactor evidence="1">
        <name>pyridoxal 5'-phosphate</name>
        <dbReference type="ChEBI" id="CHEBI:597326"/>
    </cofactor>
</comment>
<comment type="pathway">
    <text evidence="1">Cofactor biosynthesis; biotin biosynthesis.</text>
</comment>
<comment type="subunit">
    <text evidence="1">Homodimer.</text>
</comment>
<comment type="similarity">
    <text evidence="1">Belongs to the class-II pyridoxal-phosphate-dependent aminotransferase family. BioF subfamily.</text>
</comment>
<dbReference type="EC" id="2.3.1.47" evidence="1"/>
<dbReference type="EMBL" id="AE015451">
    <property type="protein sequence ID" value="AAN65994.1"/>
    <property type="molecule type" value="Genomic_DNA"/>
</dbReference>
<dbReference type="RefSeq" id="NP_742530.1">
    <property type="nucleotide sequence ID" value="NC_002947.4"/>
</dbReference>
<dbReference type="RefSeq" id="WP_010951715.1">
    <property type="nucleotide sequence ID" value="NZ_CP169744.1"/>
</dbReference>
<dbReference type="SMR" id="Q88QX1"/>
<dbReference type="STRING" id="160488.PP_0363"/>
<dbReference type="PaxDb" id="160488-PP_0363"/>
<dbReference type="GeneID" id="83677640"/>
<dbReference type="KEGG" id="ppu:PP_0363"/>
<dbReference type="PATRIC" id="fig|160488.4.peg.392"/>
<dbReference type="eggNOG" id="COG0156">
    <property type="taxonomic scope" value="Bacteria"/>
</dbReference>
<dbReference type="HOGENOM" id="CLU_015846_11_2_6"/>
<dbReference type="OrthoDB" id="9807157at2"/>
<dbReference type="PhylomeDB" id="Q88QX1"/>
<dbReference type="BioCyc" id="PPUT160488:G1G01-397-MONOMER"/>
<dbReference type="UniPathway" id="UPA00078"/>
<dbReference type="Proteomes" id="UP000000556">
    <property type="component" value="Chromosome"/>
</dbReference>
<dbReference type="GO" id="GO:0008710">
    <property type="term" value="F:8-amino-7-oxononanoate synthase activity"/>
    <property type="evidence" value="ECO:0007669"/>
    <property type="project" value="UniProtKB-UniRule"/>
</dbReference>
<dbReference type="GO" id="GO:0030170">
    <property type="term" value="F:pyridoxal phosphate binding"/>
    <property type="evidence" value="ECO:0007669"/>
    <property type="project" value="UniProtKB-UniRule"/>
</dbReference>
<dbReference type="GO" id="GO:0009102">
    <property type="term" value="P:biotin biosynthetic process"/>
    <property type="evidence" value="ECO:0007669"/>
    <property type="project" value="UniProtKB-UniRule"/>
</dbReference>
<dbReference type="CDD" id="cd06454">
    <property type="entry name" value="KBL_like"/>
    <property type="match status" value="1"/>
</dbReference>
<dbReference type="Gene3D" id="3.90.1150.10">
    <property type="entry name" value="Aspartate Aminotransferase, domain 1"/>
    <property type="match status" value="1"/>
</dbReference>
<dbReference type="Gene3D" id="3.40.640.10">
    <property type="entry name" value="Type I PLP-dependent aspartate aminotransferase-like (Major domain)"/>
    <property type="match status" value="1"/>
</dbReference>
<dbReference type="HAMAP" id="MF_01693">
    <property type="entry name" value="BioF_aminotrans_2"/>
    <property type="match status" value="1"/>
</dbReference>
<dbReference type="InterPro" id="IPR004839">
    <property type="entry name" value="Aminotransferase_I/II_large"/>
</dbReference>
<dbReference type="InterPro" id="IPR050087">
    <property type="entry name" value="AON_synthase_class-II"/>
</dbReference>
<dbReference type="InterPro" id="IPR004723">
    <property type="entry name" value="AONS_Archaea/Proteobacteria"/>
</dbReference>
<dbReference type="InterPro" id="IPR022834">
    <property type="entry name" value="AONS_Proteobacteria"/>
</dbReference>
<dbReference type="InterPro" id="IPR015424">
    <property type="entry name" value="PyrdxlP-dep_Trfase"/>
</dbReference>
<dbReference type="InterPro" id="IPR015421">
    <property type="entry name" value="PyrdxlP-dep_Trfase_major"/>
</dbReference>
<dbReference type="InterPro" id="IPR015422">
    <property type="entry name" value="PyrdxlP-dep_Trfase_small"/>
</dbReference>
<dbReference type="NCBIfam" id="TIGR00858">
    <property type="entry name" value="bioF"/>
    <property type="match status" value="1"/>
</dbReference>
<dbReference type="PANTHER" id="PTHR13693:SF100">
    <property type="entry name" value="8-AMINO-7-OXONONANOATE SYNTHASE"/>
    <property type="match status" value="1"/>
</dbReference>
<dbReference type="PANTHER" id="PTHR13693">
    <property type="entry name" value="CLASS II AMINOTRANSFERASE/8-AMINO-7-OXONONANOATE SYNTHASE"/>
    <property type="match status" value="1"/>
</dbReference>
<dbReference type="Pfam" id="PF00155">
    <property type="entry name" value="Aminotran_1_2"/>
    <property type="match status" value="1"/>
</dbReference>
<dbReference type="SUPFAM" id="SSF53383">
    <property type="entry name" value="PLP-dependent transferases"/>
    <property type="match status" value="1"/>
</dbReference>
<protein>
    <recommendedName>
        <fullName evidence="1">8-amino-7-oxononanoate synthase</fullName>
        <shortName evidence="1">AONS</shortName>
        <ecNumber evidence="1">2.3.1.47</ecNumber>
    </recommendedName>
    <alternativeName>
        <fullName evidence="1">7-keto-8-amino-pelargonic acid synthase</fullName>
        <shortName evidence="1">7-KAP synthase</shortName>
        <shortName evidence="1">KAPA synthase</shortName>
    </alternativeName>
    <alternativeName>
        <fullName evidence="1">8-amino-7-ketopelargonate synthase</fullName>
    </alternativeName>
</protein>
<accession>Q88QX1</accession>
<gene>
    <name evidence="1" type="primary">bioF</name>
    <name type="ordered locus">PP_0363</name>
    <name type="ORF">PP0363</name>
</gene>
<organism>
    <name type="scientific">Pseudomonas putida (strain ATCC 47054 / DSM 6125 / CFBP 8728 / NCIMB 11950 / KT2440)</name>
    <dbReference type="NCBI Taxonomy" id="160488"/>
    <lineage>
        <taxon>Bacteria</taxon>
        <taxon>Pseudomonadati</taxon>
        <taxon>Pseudomonadota</taxon>
        <taxon>Gammaproteobacteria</taxon>
        <taxon>Pseudomonadales</taxon>
        <taxon>Pseudomonadaceae</taxon>
        <taxon>Pseudomonas</taxon>
    </lineage>
</organism>
<evidence type="ECO:0000255" key="1">
    <source>
        <dbReference type="HAMAP-Rule" id="MF_01693"/>
    </source>
</evidence>
<name>BIOF_PSEPK</name>
<reference key="1">
    <citation type="journal article" date="2002" name="Environ. Microbiol.">
        <title>Complete genome sequence and comparative analysis of the metabolically versatile Pseudomonas putida KT2440.</title>
        <authorList>
            <person name="Nelson K.E."/>
            <person name="Weinel C."/>
            <person name="Paulsen I.T."/>
            <person name="Dodson R.J."/>
            <person name="Hilbert H."/>
            <person name="Martins dos Santos V.A.P."/>
            <person name="Fouts D.E."/>
            <person name="Gill S.R."/>
            <person name="Pop M."/>
            <person name="Holmes M."/>
            <person name="Brinkac L.M."/>
            <person name="Beanan M.J."/>
            <person name="DeBoy R.T."/>
            <person name="Daugherty S.C."/>
            <person name="Kolonay J.F."/>
            <person name="Madupu R."/>
            <person name="Nelson W.C."/>
            <person name="White O."/>
            <person name="Peterson J.D."/>
            <person name="Khouri H.M."/>
            <person name="Hance I."/>
            <person name="Chris Lee P."/>
            <person name="Holtzapple E.K."/>
            <person name="Scanlan D."/>
            <person name="Tran K."/>
            <person name="Moazzez A."/>
            <person name="Utterback T.R."/>
            <person name="Rizzo M."/>
            <person name="Lee K."/>
            <person name="Kosack D."/>
            <person name="Moestl D."/>
            <person name="Wedler H."/>
            <person name="Lauber J."/>
            <person name="Stjepandic D."/>
            <person name="Hoheisel J."/>
            <person name="Straetz M."/>
            <person name="Heim S."/>
            <person name="Kiewitz C."/>
            <person name="Eisen J.A."/>
            <person name="Timmis K.N."/>
            <person name="Duesterhoeft A."/>
            <person name="Tuemmler B."/>
            <person name="Fraser C.M."/>
        </authorList>
    </citation>
    <scope>NUCLEOTIDE SEQUENCE [LARGE SCALE GENOMIC DNA]</scope>
    <source>
        <strain>ATCC 47054 / DSM 6125 / CFBP 8728 / NCIMB 11950 / KT2440</strain>
    </source>
</reference>
<keyword id="KW-0093">Biotin biosynthesis</keyword>
<keyword id="KW-0663">Pyridoxal phosphate</keyword>
<keyword id="KW-1185">Reference proteome</keyword>
<keyword id="KW-0808">Transferase</keyword>
<proteinExistence type="inferred from homology"/>